<accession>Q68RJ9</accession>
<accession>A4FUF3</accession>
<feature type="signal peptide" evidence="1">
    <location>
        <begin position="1"/>
        <end position="27"/>
    </location>
</feature>
<feature type="chain" id="PRO_0000256516" description="Cocaine- and amphetamine-regulated transcript protein">
    <location>
        <begin position="28"/>
        <end position="116"/>
    </location>
</feature>
<feature type="peptide" id="PRO_0000256517" description="CART(1-39)" evidence="1">
    <location>
        <begin position="28"/>
        <end position="66"/>
    </location>
</feature>
<feature type="peptide" id="PRO_0000256518" description="CART(42-89)" evidence="1">
    <location>
        <begin position="69"/>
        <end position="116"/>
    </location>
</feature>
<feature type="modified residue" description="Phosphotyrosine" evidence="2">
    <location>
        <position position="41"/>
    </location>
</feature>
<feature type="modified residue" description="Phosphoserine" evidence="3">
    <location>
        <position position="48"/>
    </location>
</feature>
<feature type="disulfide bond" evidence="1">
    <location>
        <begin position="82"/>
        <end position="100"/>
    </location>
</feature>
<feature type="disulfide bond" evidence="1">
    <location>
        <begin position="88"/>
        <end position="108"/>
    </location>
</feature>
<feature type="disulfide bond" evidence="1">
    <location>
        <begin position="102"/>
        <end position="115"/>
    </location>
</feature>
<proteinExistence type="inferred from homology"/>
<organism>
    <name type="scientific">Bos taurus</name>
    <name type="common">Bovine</name>
    <dbReference type="NCBI Taxonomy" id="9913"/>
    <lineage>
        <taxon>Eukaryota</taxon>
        <taxon>Metazoa</taxon>
        <taxon>Chordata</taxon>
        <taxon>Craniata</taxon>
        <taxon>Vertebrata</taxon>
        <taxon>Euteleostomi</taxon>
        <taxon>Mammalia</taxon>
        <taxon>Eutheria</taxon>
        <taxon>Laurasiatheria</taxon>
        <taxon>Artiodactyla</taxon>
        <taxon>Ruminantia</taxon>
        <taxon>Pecora</taxon>
        <taxon>Bovidae</taxon>
        <taxon>Bovinae</taxon>
        <taxon>Bos</taxon>
    </lineage>
</organism>
<protein>
    <recommendedName>
        <fullName>Cocaine- and amphetamine-regulated transcript protein</fullName>
    </recommendedName>
    <component>
        <recommendedName>
            <fullName>CART(1-39)</fullName>
        </recommendedName>
    </component>
    <component>
        <recommendedName>
            <fullName>CART(42-89)</fullName>
        </recommendedName>
    </component>
</protein>
<dbReference type="EMBL" id="AY603972">
    <property type="protein sequence ID" value="AAT99018.1"/>
    <property type="molecule type" value="Genomic_DNA"/>
</dbReference>
<dbReference type="EMBL" id="BC114792">
    <property type="protein sequence ID" value="AAI14793.1"/>
    <property type="molecule type" value="mRNA"/>
</dbReference>
<dbReference type="RefSeq" id="NP_001007821.1">
    <property type="nucleotide sequence ID" value="NM_001007820.3"/>
</dbReference>
<dbReference type="RefSeq" id="XP_024837000.1">
    <property type="nucleotide sequence ID" value="XM_024981232.2"/>
</dbReference>
<dbReference type="SMR" id="Q68RJ9"/>
<dbReference type="FunCoup" id="Q68RJ9">
    <property type="interactions" value="76"/>
</dbReference>
<dbReference type="STRING" id="9913.ENSBTAP00000055162"/>
<dbReference type="PaxDb" id="9913-ENSBTAP00000055162"/>
<dbReference type="Ensembl" id="ENSBTAT00000064119.2">
    <property type="protein sequence ID" value="ENSBTAP00000055162.1"/>
    <property type="gene ID" value="ENSBTAG00000047486.2"/>
</dbReference>
<dbReference type="GeneID" id="493726"/>
<dbReference type="KEGG" id="bta:493726"/>
<dbReference type="CTD" id="9607"/>
<dbReference type="VEuPathDB" id="HostDB:ENSBTAG00000047486"/>
<dbReference type="VGNC" id="VGNC:26774">
    <property type="gene designation" value="CARTPT"/>
</dbReference>
<dbReference type="eggNOG" id="ENOG502S2YU">
    <property type="taxonomic scope" value="Eukaryota"/>
</dbReference>
<dbReference type="GeneTree" id="ENSGT00390000018319"/>
<dbReference type="HOGENOM" id="CLU_157363_1_0_1"/>
<dbReference type="InParanoid" id="Q68RJ9"/>
<dbReference type="OMA" id="RIYEKKY"/>
<dbReference type="OrthoDB" id="9936511at2759"/>
<dbReference type="TreeFam" id="TF332948"/>
<dbReference type="Proteomes" id="UP000009136">
    <property type="component" value="Chromosome 20"/>
</dbReference>
<dbReference type="Bgee" id="ENSBTAG00000047486">
    <property type="expression patterns" value="Expressed in Ammon's horn and 44 other cell types or tissues"/>
</dbReference>
<dbReference type="GO" id="GO:0005615">
    <property type="term" value="C:extracellular space"/>
    <property type="evidence" value="ECO:0000250"/>
    <property type="project" value="HGNC-UCL"/>
</dbReference>
<dbReference type="GO" id="GO:0030141">
    <property type="term" value="C:secretory granule"/>
    <property type="evidence" value="ECO:0007669"/>
    <property type="project" value="Ensembl"/>
</dbReference>
<dbReference type="GO" id="GO:0045202">
    <property type="term" value="C:synapse"/>
    <property type="evidence" value="ECO:0007669"/>
    <property type="project" value="GOC"/>
</dbReference>
<dbReference type="GO" id="GO:0005184">
    <property type="term" value="F:neuropeptide hormone activity"/>
    <property type="evidence" value="ECO:0007669"/>
    <property type="project" value="InterPro"/>
</dbReference>
<dbReference type="GO" id="GO:0008343">
    <property type="term" value="P:adult feeding behavior"/>
    <property type="evidence" value="ECO:0000250"/>
    <property type="project" value="HGNC-UCL"/>
</dbReference>
<dbReference type="GO" id="GO:0009267">
    <property type="term" value="P:cellular response to starvation"/>
    <property type="evidence" value="ECO:0000250"/>
    <property type="project" value="HGNC-UCL"/>
</dbReference>
<dbReference type="GO" id="GO:0007268">
    <property type="term" value="P:chemical synaptic transmission"/>
    <property type="evidence" value="ECO:0007669"/>
    <property type="project" value="UniProtKB-KW"/>
</dbReference>
<dbReference type="GO" id="GO:0032922">
    <property type="term" value="P:circadian regulation of gene expression"/>
    <property type="evidence" value="ECO:0000250"/>
    <property type="project" value="HGNC-UCL"/>
</dbReference>
<dbReference type="GO" id="GO:0007186">
    <property type="term" value="P:G protein-coupled receptor signaling pathway"/>
    <property type="evidence" value="ECO:0000250"/>
    <property type="project" value="HGNC-UCL"/>
</dbReference>
<dbReference type="GO" id="GO:0001678">
    <property type="term" value="P:intracellular glucose homeostasis"/>
    <property type="evidence" value="ECO:0000250"/>
    <property type="project" value="HGNC-UCL"/>
</dbReference>
<dbReference type="GO" id="GO:0032099">
    <property type="term" value="P:negative regulation of appetite"/>
    <property type="evidence" value="ECO:0000250"/>
    <property type="project" value="HGNC-UCL"/>
</dbReference>
<dbReference type="GO" id="GO:0045779">
    <property type="term" value="P:negative regulation of bone resorption"/>
    <property type="evidence" value="ECO:0007669"/>
    <property type="project" value="Ensembl"/>
</dbReference>
<dbReference type="GO" id="GO:0007218">
    <property type="term" value="P:neuropeptide signaling pathway"/>
    <property type="evidence" value="ECO:0007669"/>
    <property type="project" value="UniProtKB-KW"/>
</dbReference>
<dbReference type="GO" id="GO:0045777">
    <property type="term" value="P:positive regulation of blood pressure"/>
    <property type="evidence" value="ECO:0000250"/>
    <property type="project" value="HGNC-UCL"/>
</dbReference>
<dbReference type="GO" id="GO:0032812">
    <property type="term" value="P:positive regulation of epinephrine secretion"/>
    <property type="evidence" value="ECO:0000250"/>
    <property type="project" value="HGNC-UCL"/>
</dbReference>
<dbReference type="GO" id="GO:0043410">
    <property type="term" value="P:positive regulation of MAPK cascade"/>
    <property type="evidence" value="ECO:0000250"/>
    <property type="project" value="HGNC-UCL"/>
</dbReference>
<dbReference type="GO" id="GO:0051971">
    <property type="term" value="P:positive regulation of transmission of nerve impulse"/>
    <property type="evidence" value="ECO:0000250"/>
    <property type="project" value="HGNC-UCL"/>
</dbReference>
<dbReference type="CDD" id="cd22741">
    <property type="entry name" value="CART_CTD-like"/>
    <property type="match status" value="1"/>
</dbReference>
<dbReference type="FunFam" id="4.10.40.30:FF:000001">
    <property type="entry name" value="Cocaine-and amphetamine-regulated transcript protein"/>
    <property type="match status" value="1"/>
</dbReference>
<dbReference type="Gene3D" id="4.10.40.30">
    <property type="entry name" value="CART, C-terminal domain"/>
    <property type="match status" value="1"/>
</dbReference>
<dbReference type="InterPro" id="IPR009106">
    <property type="entry name" value="CART"/>
</dbReference>
<dbReference type="InterPro" id="IPR036722">
    <property type="entry name" value="CART_C_sf"/>
</dbReference>
<dbReference type="PANTHER" id="PTHR16655">
    <property type="entry name" value="COCAINE AND AMPHETAMINE REGULATED TRANSCRIPT PROTEIN"/>
    <property type="match status" value="1"/>
</dbReference>
<dbReference type="PANTHER" id="PTHR16655:SF0">
    <property type="entry name" value="COCAINE- AND AMPHETAMINE-REGULATED TRANSCRIPT PROTEIN"/>
    <property type="match status" value="1"/>
</dbReference>
<dbReference type="Pfam" id="PF06373">
    <property type="entry name" value="CART"/>
    <property type="match status" value="1"/>
</dbReference>
<dbReference type="SUPFAM" id="SSF64546">
    <property type="entry name" value="Satiety factor CART (cocaine and amphetamine regulated transcript)"/>
    <property type="match status" value="1"/>
</dbReference>
<sequence>MESPRLRLLPLLGAALLLLLPLLGALAQEDAELQPRALDIYSAVEDASHEKELIEALQEVLKKLKSKRIPIYEKKYGQVPMCDAGEQCAVRKGARIGKLCDCPRGTSCNSFLLKCL</sequence>
<gene>
    <name type="primary">CARTPT</name>
    <name type="synonym">CART</name>
</gene>
<keyword id="KW-0165">Cleavage on pair of basic residues</keyword>
<keyword id="KW-1015">Disulfide bond</keyword>
<keyword id="KW-0527">Neuropeptide</keyword>
<keyword id="KW-0529">Neurotransmitter</keyword>
<keyword id="KW-0550">Obesity</keyword>
<keyword id="KW-0597">Phosphoprotein</keyword>
<keyword id="KW-1185">Reference proteome</keyword>
<keyword id="KW-0964">Secreted</keyword>
<keyword id="KW-0732">Signal</keyword>
<name>CART_BOVIN</name>
<evidence type="ECO:0000250" key="1"/>
<evidence type="ECO:0000250" key="2">
    <source>
        <dbReference type="UniProtKB" id="P49192"/>
    </source>
</evidence>
<evidence type="ECO:0000250" key="3">
    <source>
        <dbReference type="UniProtKB" id="P56388"/>
    </source>
</evidence>
<evidence type="ECO:0000305" key="4"/>
<comment type="function">
    <text evidence="1">Satiety factor closely associated with the actions of leptin and neuropeptide y; this anorectic peptide inhibits both normal and starvation-induced feeding and completely blocks the feeding response induced by neuropeptide Y and regulated by leptin in the hypothalamus.</text>
</comment>
<comment type="subcellular location">
    <subcellularLocation>
        <location evidence="4">Secreted</location>
    </subcellularLocation>
</comment>
<comment type="similarity">
    <text evidence="4">Belongs to the CART family.</text>
</comment>
<reference key="1">
    <citation type="journal article" date="2005" name="Anim. Genet.">
        <title>The bovine cocaine and amphetamine-regulated transcript locus: gene characterization and SNP discovery.</title>
        <authorList>
            <person name="Valle E."/>
            <person name="Moore S.S."/>
            <person name="Jann O."/>
            <person name="Williams J.L."/>
            <person name="Crews D.H."/>
            <person name="Benkel B.F."/>
        </authorList>
    </citation>
    <scope>NUCLEOTIDE SEQUENCE [GENOMIC DNA]</scope>
</reference>
<reference key="2">
    <citation type="submission" date="2006-04" db="EMBL/GenBank/DDBJ databases">
        <authorList>
            <consortium name="NIH - Mammalian Gene Collection (MGC) project"/>
        </authorList>
    </citation>
    <scope>NUCLEOTIDE SEQUENCE [LARGE SCALE MRNA]</scope>
    <source>
        <strain>Hereford</strain>
        <tissue>Hypothalamus</tissue>
    </source>
</reference>